<sequence>MNNRVHQGHFARKRFGQNFLTDSYIIESIVESIYPQPGEAVIEIGPGLGALTEPVGERMDKMTVVEIDRDLAARLEVHPTLKDKLTIIQQDAMTIDFAQLAKERQQPLRVFGNLPYNISTPLMFHLFSFADAISDMTFMLQKEVVNRLVASHGSKTYGRLSVMAQYHCQVIPIIEVPPSSFKPAPKVDSAVVRLIPYKEKPYPVTDIAMLSRITSQAFNQRRKTLRNSLGGLLTAEDMLALDIDPTARAENISVEQYCKVANWLSSQQQHAE</sequence>
<comment type="function">
    <text evidence="1">Specifically dimethylates two adjacent adenosines (A1518 and A1519) in the loop of a conserved hairpin near the 3'-end of 16S rRNA in the 30S particle. May play a critical role in biogenesis of 30S subunits.</text>
</comment>
<comment type="catalytic activity">
    <reaction evidence="1">
        <text>adenosine(1518)/adenosine(1519) in 16S rRNA + 4 S-adenosyl-L-methionine = N(6)-dimethyladenosine(1518)/N(6)-dimethyladenosine(1519) in 16S rRNA + 4 S-adenosyl-L-homocysteine + 4 H(+)</text>
        <dbReference type="Rhea" id="RHEA:19609"/>
        <dbReference type="Rhea" id="RHEA-COMP:10232"/>
        <dbReference type="Rhea" id="RHEA-COMP:10233"/>
        <dbReference type="ChEBI" id="CHEBI:15378"/>
        <dbReference type="ChEBI" id="CHEBI:57856"/>
        <dbReference type="ChEBI" id="CHEBI:59789"/>
        <dbReference type="ChEBI" id="CHEBI:74411"/>
        <dbReference type="ChEBI" id="CHEBI:74493"/>
        <dbReference type="EC" id="2.1.1.182"/>
    </reaction>
</comment>
<comment type="subcellular location">
    <subcellularLocation>
        <location evidence="1">Cytoplasm</location>
    </subcellularLocation>
</comment>
<comment type="similarity">
    <text evidence="1">Belongs to the class I-like SAM-binding methyltransferase superfamily. rRNA adenine N(6)-methyltransferase family. RsmA subfamily.</text>
</comment>
<feature type="chain" id="PRO_1000130308" description="Ribosomal RNA small subunit methyltransferase A">
    <location>
        <begin position="1"/>
        <end position="272"/>
    </location>
</feature>
<feature type="binding site" evidence="1">
    <location>
        <position position="18"/>
    </location>
    <ligand>
        <name>S-adenosyl-L-methionine</name>
        <dbReference type="ChEBI" id="CHEBI:59789"/>
    </ligand>
</feature>
<feature type="binding site" evidence="1">
    <location>
        <position position="20"/>
    </location>
    <ligand>
        <name>S-adenosyl-L-methionine</name>
        <dbReference type="ChEBI" id="CHEBI:59789"/>
    </ligand>
</feature>
<feature type="binding site" evidence="1">
    <location>
        <position position="45"/>
    </location>
    <ligand>
        <name>S-adenosyl-L-methionine</name>
        <dbReference type="ChEBI" id="CHEBI:59789"/>
    </ligand>
</feature>
<feature type="binding site" evidence="1">
    <location>
        <position position="66"/>
    </location>
    <ligand>
        <name>S-adenosyl-L-methionine</name>
        <dbReference type="ChEBI" id="CHEBI:59789"/>
    </ligand>
</feature>
<feature type="binding site" evidence="1">
    <location>
        <position position="91"/>
    </location>
    <ligand>
        <name>S-adenosyl-L-methionine</name>
        <dbReference type="ChEBI" id="CHEBI:59789"/>
    </ligand>
</feature>
<feature type="binding site" evidence="1">
    <location>
        <position position="113"/>
    </location>
    <ligand>
        <name>S-adenosyl-L-methionine</name>
        <dbReference type="ChEBI" id="CHEBI:59789"/>
    </ligand>
</feature>
<proteinExistence type="inferred from homology"/>
<dbReference type="EC" id="2.1.1.182" evidence="1"/>
<dbReference type="EMBL" id="AM942759">
    <property type="protein sequence ID" value="CAR44618.1"/>
    <property type="molecule type" value="Genomic_DNA"/>
</dbReference>
<dbReference type="RefSeq" id="WP_004245541.1">
    <property type="nucleotide sequence ID" value="NC_010554.1"/>
</dbReference>
<dbReference type="SMR" id="B4F2I2"/>
<dbReference type="EnsemblBacteria" id="CAR44618">
    <property type="protein sequence ID" value="CAR44618"/>
    <property type="gene ID" value="PMI2334"/>
</dbReference>
<dbReference type="GeneID" id="6801468"/>
<dbReference type="KEGG" id="pmr:PMI2334"/>
<dbReference type="eggNOG" id="COG0030">
    <property type="taxonomic scope" value="Bacteria"/>
</dbReference>
<dbReference type="HOGENOM" id="CLU_041220_0_1_6"/>
<dbReference type="Proteomes" id="UP000008319">
    <property type="component" value="Chromosome"/>
</dbReference>
<dbReference type="GO" id="GO:0005829">
    <property type="term" value="C:cytosol"/>
    <property type="evidence" value="ECO:0007669"/>
    <property type="project" value="TreeGrafter"/>
</dbReference>
<dbReference type="GO" id="GO:0052908">
    <property type="term" value="F:16S rRNA (adenine(1518)-N(6)/adenine(1519)-N(6))-dimethyltransferase activity"/>
    <property type="evidence" value="ECO:0007669"/>
    <property type="project" value="UniProtKB-EC"/>
</dbReference>
<dbReference type="GO" id="GO:0003723">
    <property type="term" value="F:RNA binding"/>
    <property type="evidence" value="ECO:0007669"/>
    <property type="project" value="UniProtKB-KW"/>
</dbReference>
<dbReference type="CDD" id="cd02440">
    <property type="entry name" value="AdoMet_MTases"/>
    <property type="match status" value="1"/>
</dbReference>
<dbReference type="FunFam" id="1.10.8.100:FF:000001">
    <property type="entry name" value="Ribosomal RNA small subunit methyltransferase A"/>
    <property type="match status" value="1"/>
</dbReference>
<dbReference type="FunFam" id="3.40.50.150:FF:000006">
    <property type="entry name" value="Ribosomal RNA small subunit methyltransferase A"/>
    <property type="match status" value="1"/>
</dbReference>
<dbReference type="Gene3D" id="1.10.8.100">
    <property type="entry name" value="Ribosomal RNA adenine dimethylase-like, domain 2"/>
    <property type="match status" value="1"/>
</dbReference>
<dbReference type="Gene3D" id="3.40.50.150">
    <property type="entry name" value="Vaccinia Virus protein VP39"/>
    <property type="match status" value="1"/>
</dbReference>
<dbReference type="HAMAP" id="MF_00607">
    <property type="entry name" value="16SrRNA_methyltr_A"/>
    <property type="match status" value="1"/>
</dbReference>
<dbReference type="InterPro" id="IPR001737">
    <property type="entry name" value="KsgA/Erm"/>
</dbReference>
<dbReference type="InterPro" id="IPR023165">
    <property type="entry name" value="rRNA_Ade_diMease-like_C"/>
</dbReference>
<dbReference type="InterPro" id="IPR020596">
    <property type="entry name" value="rRNA_Ade_Mease_Trfase_CS"/>
</dbReference>
<dbReference type="InterPro" id="IPR020598">
    <property type="entry name" value="rRNA_Ade_methylase_Trfase_N"/>
</dbReference>
<dbReference type="InterPro" id="IPR011530">
    <property type="entry name" value="rRNA_adenine_dimethylase"/>
</dbReference>
<dbReference type="InterPro" id="IPR029063">
    <property type="entry name" value="SAM-dependent_MTases_sf"/>
</dbReference>
<dbReference type="NCBIfam" id="TIGR00755">
    <property type="entry name" value="ksgA"/>
    <property type="match status" value="1"/>
</dbReference>
<dbReference type="PANTHER" id="PTHR11727">
    <property type="entry name" value="DIMETHYLADENOSINE TRANSFERASE"/>
    <property type="match status" value="1"/>
</dbReference>
<dbReference type="PANTHER" id="PTHR11727:SF7">
    <property type="entry name" value="DIMETHYLADENOSINE TRANSFERASE-RELATED"/>
    <property type="match status" value="1"/>
</dbReference>
<dbReference type="Pfam" id="PF00398">
    <property type="entry name" value="RrnaAD"/>
    <property type="match status" value="1"/>
</dbReference>
<dbReference type="SMART" id="SM00650">
    <property type="entry name" value="rADc"/>
    <property type="match status" value="1"/>
</dbReference>
<dbReference type="SUPFAM" id="SSF53335">
    <property type="entry name" value="S-adenosyl-L-methionine-dependent methyltransferases"/>
    <property type="match status" value="1"/>
</dbReference>
<dbReference type="PROSITE" id="PS01131">
    <property type="entry name" value="RRNA_A_DIMETH"/>
    <property type="match status" value="1"/>
</dbReference>
<dbReference type="PROSITE" id="PS51689">
    <property type="entry name" value="SAM_RNA_A_N6_MT"/>
    <property type="match status" value="1"/>
</dbReference>
<evidence type="ECO:0000255" key="1">
    <source>
        <dbReference type="HAMAP-Rule" id="MF_00607"/>
    </source>
</evidence>
<reference key="1">
    <citation type="journal article" date="2008" name="J. Bacteriol.">
        <title>Complete genome sequence of uropathogenic Proteus mirabilis, a master of both adherence and motility.</title>
        <authorList>
            <person name="Pearson M.M."/>
            <person name="Sebaihia M."/>
            <person name="Churcher C."/>
            <person name="Quail M.A."/>
            <person name="Seshasayee A.S."/>
            <person name="Luscombe N.M."/>
            <person name="Abdellah Z."/>
            <person name="Arrosmith C."/>
            <person name="Atkin B."/>
            <person name="Chillingworth T."/>
            <person name="Hauser H."/>
            <person name="Jagels K."/>
            <person name="Moule S."/>
            <person name="Mungall K."/>
            <person name="Norbertczak H."/>
            <person name="Rabbinowitsch E."/>
            <person name="Walker D."/>
            <person name="Whithead S."/>
            <person name="Thomson N.R."/>
            <person name="Rather P.N."/>
            <person name="Parkhill J."/>
            <person name="Mobley H.L.T."/>
        </authorList>
    </citation>
    <scope>NUCLEOTIDE SEQUENCE [LARGE SCALE GENOMIC DNA]</scope>
    <source>
        <strain>HI4320</strain>
    </source>
</reference>
<organism>
    <name type="scientific">Proteus mirabilis (strain HI4320)</name>
    <dbReference type="NCBI Taxonomy" id="529507"/>
    <lineage>
        <taxon>Bacteria</taxon>
        <taxon>Pseudomonadati</taxon>
        <taxon>Pseudomonadota</taxon>
        <taxon>Gammaproteobacteria</taxon>
        <taxon>Enterobacterales</taxon>
        <taxon>Morganellaceae</taxon>
        <taxon>Proteus</taxon>
    </lineage>
</organism>
<name>RSMA_PROMH</name>
<keyword id="KW-0963">Cytoplasm</keyword>
<keyword id="KW-0489">Methyltransferase</keyword>
<keyword id="KW-1185">Reference proteome</keyword>
<keyword id="KW-0694">RNA-binding</keyword>
<keyword id="KW-0698">rRNA processing</keyword>
<keyword id="KW-0949">S-adenosyl-L-methionine</keyword>
<keyword id="KW-0808">Transferase</keyword>
<accession>B4F2I2</accession>
<gene>
    <name evidence="1" type="primary">rsmA</name>
    <name evidence="1" type="synonym">ksgA</name>
    <name type="ordered locus">PMI2334</name>
</gene>
<protein>
    <recommendedName>
        <fullName evidence="1">Ribosomal RNA small subunit methyltransferase A</fullName>
        <ecNumber evidence="1">2.1.1.182</ecNumber>
    </recommendedName>
    <alternativeName>
        <fullName evidence="1">16S rRNA (adenine(1518)-N(6)/adenine(1519)-N(6))-dimethyltransferase</fullName>
    </alternativeName>
    <alternativeName>
        <fullName evidence="1">16S rRNA dimethyladenosine transferase</fullName>
    </alternativeName>
    <alternativeName>
        <fullName evidence="1">16S rRNA dimethylase</fullName>
    </alternativeName>
    <alternativeName>
        <fullName evidence="1">S-adenosylmethionine-6-N', N'-adenosyl(rRNA) dimethyltransferase</fullName>
    </alternativeName>
</protein>